<reference key="1">
    <citation type="submission" date="2006-12" db="EMBL/GenBank/DDBJ databases">
        <title>Complete sequence of Mycobacterium vanbaalenii PYR-1.</title>
        <authorList>
            <consortium name="US DOE Joint Genome Institute"/>
            <person name="Copeland A."/>
            <person name="Lucas S."/>
            <person name="Lapidus A."/>
            <person name="Barry K."/>
            <person name="Detter J.C."/>
            <person name="Glavina del Rio T."/>
            <person name="Hammon N."/>
            <person name="Israni S."/>
            <person name="Dalin E."/>
            <person name="Tice H."/>
            <person name="Pitluck S."/>
            <person name="Singan V."/>
            <person name="Schmutz J."/>
            <person name="Larimer F."/>
            <person name="Land M."/>
            <person name="Hauser L."/>
            <person name="Kyrpides N."/>
            <person name="Anderson I.J."/>
            <person name="Miller C."/>
            <person name="Richardson P."/>
        </authorList>
    </citation>
    <scope>NUCLEOTIDE SEQUENCE [LARGE SCALE GENOMIC DNA]</scope>
    <source>
        <strain>DSM 7251 / JCM 13017 / BCRC 16820 / KCTC 9966 / NRRL B-24157 / PYR-1</strain>
    </source>
</reference>
<proteinExistence type="inferred from homology"/>
<dbReference type="EMBL" id="CP000511">
    <property type="protein sequence ID" value="ABM10852.1"/>
    <property type="molecule type" value="Genomic_DNA"/>
</dbReference>
<dbReference type="RefSeq" id="WP_011777326.1">
    <property type="nucleotide sequence ID" value="NZ_JACKSD010000290.1"/>
</dbReference>
<dbReference type="SMR" id="A1T102"/>
<dbReference type="STRING" id="350058.Mvan_0001"/>
<dbReference type="KEGG" id="mva:Mvan_0001"/>
<dbReference type="eggNOG" id="COG0593">
    <property type="taxonomic scope" value="Bacteria"/>
</dbReference>
<dbReference type="HOGENOM" id="CLU_026910_2_0_11"/>
<dbReference type="Proteomes" id="UP000009159">
    <property type="component" value="Chromosome"/>
</dbReference>
<dbReference type="GO" id="GO:0005737">
    <property type="term" value="C:cytoplasm"/>
    <property type="evidence" value="ECO:0007669"/>
    <property type="project" value="UniProtKB-SubCell"/>
</dbReference>
<dbReference type="GO" id="GO:0005886">
    <property type="term" value="C:plasma membrane"/>
    <property type="evidence" value="ECO:0007669"/>
    <property type="project" value="TreeGrafter"/>
</dbReference>
<dbReference type="GO" id="GO:0005524">
    <property type="term" value="F:ATP binding"/>
    <property type="evidence" value="ECO:0007669"/>
    <property type="project" value="UniProtKB-UniRule"/>
</dbReference>
<dbReference type="GO" id="GO:0016887">
    <property type="term" value="F:ATP hydrolysis activity"/>
    <property type="evidence" value="ECO:0007669"/>
    <property type="project" value="InterPro"/>
</dbReference>
<dbReference type="GO" id="GO:0003688">
    <property type="term" value="F:DNA replication origin binding"/>
    <property type="evidence" value="ECO:0007669"/>
    <property type="project" value="UniProtKB-UniRule"/>
</dbReference>
<dbReference type="GO" id="GO:0008289">
    <property type="term" value="F:lipid binding"/>
    <property type="evidence" value="ECO:0007669"/>
    <property type="project" value="UniProtKB-KW"/>
</dbReference>
<dbReference type="GO" id="GO:0006270">
    <property type="term" value="P:DNA replication initiation"/>
    <property type="evidence" value="ECO:0007669"/>
    <property type="project" value="UniProtKB-UniRule"/>
</dbReference>
<dbReference type="GO" id="GO:0006275">
    <property type="term" value="P:regulation of DNA replication"/>
    <property type="evidence" value="ECO:0007669"/>
    <property type="project" value="UniProtKB-UniRule"/>
</dbReference>
<dbReference type="CDD" id="cd00009">
    <property type="entry name" value="AAA"/>
    <property type="match status" value="1"/>
</dbReference>
<dbReference type="CDD" id="cd06571">
    <property type="entry name" value="Bac_DnaA_C"/>
    <property type="match status" value="1"/>
</dbReference>
<dbReference type="FunFam" id="1.10.1750.10:FF:000002">
    <property type="entry name" value="Chromosomal replication initiator protein DnaA"/>
    <property type="match status" value="1"/>
</dbReference>
<dbReference type="FunFam" id="1.10.8.60:FF:000003">
    <property type="entry name" value="Chromosomal replication initiator protein DnaA"/>
    <property type="match status" value="1"/>
</dbReference>
<dbReference type="FunFam" id="3.40.50.300:FF:000150">
    <property type="entry name" value="Chromosomal replication initiator protein DnaA"/>
    <property type="match status" value="1"/>
</dbReference>
<dbReference type="Gene3D" id="1.10.1750.10">
    <property type="match status" value="1"/>
</dbReference>
<dbReference type="Gene3D" id="1.10.8.60">
    <property type="match status" value="1"/>
</dbReference>
<dbReference type="Gene3D" id="3.30.300.180">
    <property type="match status" value="1"/>
</dbReference>
<dbReference type="Gene3D" id="3.40.50.300">
    <property type="entry name" value="P-loop containing nucleotide triphosphate hydrolases"/>
    <property type="match status" value="1"/>
</dbReference>
<dbReference type="HAMAP" id="MF_00377">
    <property type="entry name" value="DnaA_bact"/>
    <property type="match status" value="1"/>
</dbReference>
<dbReference type="InterPro" id="IPR003593">
    <property type="entry name" value="AAA+_ATPase"/>
</dbReference>
<dbReference type="InterPro" id="IPR001957">
    <property type="entry name" value="Chromosome_initiator_DnaA"/>
</dbReference>
<dbReference type="InterPro" id="IPR020591">
    <property type="entry name" value="Chromosome_initiator_DnaA-like"/>
</dbReference>
<dbReference type="InterPro" id="IPR018312">
    <property type="entry name" value="Chromosome_initiator_DnaA_CS"/>
</dbReference>
<dbReference type="InterPro" id="IPR013159">
    <property type="entry name" value="DnaA_C"/>
</dbReference>
<dbReference type="InterPro" id="IPR013317">
    <property type="entry name" value="DnaA_dom"/>
</dbReference>
<dbReference type="InterPro" id="IPR038454">
    <property type="entry name" value="DnaA_N_sf"/>
</dbReference>
<dbReference type="InterPro" id="IPR027417">
    <property type="entry name" value="P-loop_NTPase"/>
</dbReference>
<dbReference type="InterPro" id="IPR010921">
    <property type="entry name" value="Trp_repressor/repl_initiator"/>
</dbReference>
<dbReference type="NCBIfam" id="TIGR00362">
    <property type="entry name" value="DnaA"/>
    <property type="match status" value="1"/>
</dbReference>
<dbReference type="NCBIfam" id="NF010686">
    <property type="entry name" value="PRK14086.1"/>
    <property type="match status" value="1"/>
</dbReference>
<dbReference type="PANTHER" id="PTHR30050">
    <property type="entry name" value="CHROMOSOMAL REPLICATION INITIATOR PROTEIN DNAA"/>
    <property type="match status" value="1"/>
</dbReference>
<dbReference type="PANTHER" id="PTHR30050:SF2">
    <property type="entry name" value="CHROMOSOMAL REPLICATION INITIATOR PROTEIN DNAA"/>
    <property type="match status" value="1"/>
</dbReference>
<dbReference type="Pfam" id="PF00308">
    <property type="entry name" value="Bac_DnaA"/>
    <property type="match status" value="1"/>
</dbReference>
<dbReference type="Pfam" id="PF08299">
    <property type="entry name" value="Bac_DnaA_C"/>
    <property type="match status" value="1"/>
</dbReference>
<dbReference type="PRINTS" id="PR00051">
    <property type="entry name" value="DNAA"/>
</dbReference>
<dbReference type="SMART" id="SM00382">
    <property type="entry name" value="AAA"/>
    <property type="match status" value="1"/>
</dbReference>
<dbReference type="SMART" id="SM00760">
    <property type="entry name" value="Bac_DnaA_C"/>
    <property type="match status" value="1"/>
</dbReference>
<dbReference type="SUPFAM" id="SSF52540">
    <property type="entry name" value="P-loop containing nucleoside triphosphate hydrolases"/>
    <property type="match status" value="1"/>
</dbReference>
<dbReference type="SUPFAM" id="SSF48295">
    <property type="entry name" value="TrpR-like"/>
    <property type="match status" value="1"/>
</dbReference>
<dbReference type="PROSITE" id="PS01008">
    <property type="entry name" value="DNAA"/>
    <property type="match status" value="1"/>
</dbReference>
<evidence type="ECO:0000255" key="1">
    <source>
        <dbReference type="HAMAP-Rule" id="MF_00377"/>
    </source>
</evidence>
<evidence type="ECO:0000256" key="2">
    <source>
        <dbReference type="SAM" id="MobiDB-lite"/>
    </source>
</evidence>
<name>DNAA_MYCVP</name>
<accession>A1T102</accession>
<keyword id="KW-0067">ATP-binding</keyword>
<keyword id="KW-0963">Cytoplasm</keyword>
<keyword id="KW-0235">DNA replication</keyword>
<keyword id="KW-0238">DNA-binding</keyword>
<keyword id="KW-0446">Lipid-binding</keyword>
<keyword id="KW-0547">Nucleotide-binding</keyword>
<sequence length="494" mass="55279">MTTDPDPPFVSIWDNVVTELNGAGEVGNGSLTPQQRAWLKLVKPLVITEGFALLSVPTPFVQNEIERHLREPIVAALSRQLGQRVELGVRIADPVSDESDSGSVASPAPVAAADPDDDVVDDDLAARASAEESWPSYFTNRANRAAEDDATSVNLNRRYTFDTFVIGASNRFAHAASLAIAEAPARAYNPLFIWGESGLGKTHLLHAAGNYAQRLFPGMRVKYVSTEEFTNDFINSLRDDRRASFKRTYRDIDVLLVDDIQFIEGKDGIQEEFFHTFNTLHNANKQIVISSDRPPKQLATLEDRLRTRFEWGLITDVQPPELETRIAILRKKAQMDRLDVPGDVLELIASRIERNIRELEGALIRVTAFASLNKTPIDKSLAEIVLRDLISDSSTMQISTAAIMAATAEYFETSVEELRGPGKTRALAQSRQIAMYLCRELTDLSLPKIGQAFGRDHTTVMYAEKKIRAEMAERREVFDHVKELTTRIRQRAKR</sequence>
<gene>
    <name evidence="1" type="primary">dnaA</name>
    <name type="ordered locus">Mvan_0001</name>
</gene>
<comment type="function">
    <text evidence="1">Plays an essential role in the initiation and regulation of chromosomal replication. ATP-DnaA binds to the origin of replication (oriC) to initiate formation of the DNA replication initiation complex once per cell cycle. Binds the DnaA box (a 9 base pair repeat at the origin) and separates the double-stranded (ds)DNA. Forms a right-handed helical filament on oriC DNA; dsDNA binds to the exterior of the filament while single-stranded (ss)DNA is stabiized in the filament's interior. The ATP-DnaA-oriC complex binds and stabilizes one strand of the AT-rich DNA unwinding element (DUE), permitting loading of DNA polymerase. After initiation quickly degrades to an ADP-DnaA complex that is not apt for DNA replication. Binds acidic phospholipids.</text>
</comment>
<comment type="subunit">
    <text evidence="1">Oligomerizes as a right-handed, spiral filament on DNA at oriC.</text>
</comment>
<comment type="subcellular location">
    <subcellularLocation>
        <location evidence="1">Cytoplasm</location>
    </subcellularLocation>
</comment>
<comment type="domain">
    <text evidence="1">Domain I is involved in oligomerization and binding regulators, domain II is flexibile and of varying length in different bacteria, domain III forms the AAA+ region, while domain IV binds dsDNA.</text>
</comment>
<comment type="similarity">
    <text evidence="1">Belongs to the DnaA family.</text>
</comment>
<protein>
    <recommendedName>
        <fullName evidence="1">Chromosomal replication initiator protein DnaA</fullName>
    </recommendedName>
</protein>
<organism>
    <name type="scientific">Mycolicibacterium vanbaalenii (strain DSM 7251 / JCM 13017 / BCRC 16820 / KCTC 9966 / NRRL B-24157 / PYR-1)</name>
    <name type="common">Mycobacterium vanbaalenii</name>
    <dbReference type="NCBI Taxonomy" id="350058"/>
    <lineage>
        <taxon>Bacteria</taxon>
        <taxon>Bacillati</taxon>
        <taxon>Actinomycetota</taxon>
        <taxon>Actinomycetes</taxon>
        <taxon>Mycobacteriales</taxon>
        <taxon>Mycobacteriaceae</taxon>
        <taxon>Mycolicibacterium</taxon>
    </lineage>
</organism>
<feature type="chain" id="PRO_1000048676" description="Chromosomal replication initiator protein DnaA">
    <location>
        <begin position="1"/>
        <end position="494"/>
    </location>
</feature>
<feature type="region of interest" description="Domain I, interacts with DnaA modulators" evidence="1">
    <location>
        <begin position="1"/>
        <end position="103"/>
    </location>
</feature>
<feature type="region of interest" description="Disordered" evidence="2">
    <location>
        <begin position="94"/>
        <end position="117"/>
    </location>
</feature>
<feature type="region of interest" description="Domain II" evidence="1">
    <location>
        <begin position="104"/>
        <end position="153"/>
    </location>
</feature>
<feature type="region of interest" description="Domain III, AAA+ region" evidence="1">
    <location>
        <begin position="154"/>
        <end position="370"/>
    </location>
</feature>
<feature type="region of interest" description="Domain IV, binds dsDNA" evidence="1">
    <location>
        <begin position="371"/>
        <end position="494"/>
    </location>
</feature>
<feature type="compositionally biased region" description="Low complexity" evidence="2">
    <location>
        <begin position="101"/>
        <end position="113"/>
    </location>
</feature>
<feature type="binding site" evidence="1">
    <location>
        <position position="198"/>
    </location>
    <ligand>
        <name>ATP</name>
        <dbReference type="ChEBI" id="CHEBI:30616"/>
    </ligand>
</feature>
<feature type="binding site" evidence="1">
    <location>
        <position position="200"/>
    </location>
    <ligand>
        <name>ATP</name>
        <dbReference type="ChEBI" id="CHEBI:30616"/>
    </ligand>
</feature>
<feature type="binding site" evidence="1">
    <location>
        <position position="201"/>
    </location>
    <ligand>
        <name>ATP</name>
        <dbReference type="ChEBI" id="CHEBI:30616"/>
    </ligand>
</feature>
<feature type="binding site" evidence="1">
    <location>
        <position position="202"/>
    </location>
    <ligand>
        <name>ATP</name>
        <dbReference type="ChEBI" id="CHEBI:30616"/>
    </ligand>
</feature>